<name>Y8017_DICDI</name>
<accession>Q1ZXD9</accession>
<feature type="chain" id="PRO_0000389554" description="Sphingomyelinase DDB_G0288017">
    <location>
        <begin position="1"/>
        <end position="458"/>
    </location>
</feature>
<feature type="region of interest" description="Disordered" evidence="2">
    <location>
        <begin position="91"/>
        <end position="111"/>
    </location>
</feature>
<feature type="active site" description="Proton acceptor" evidence="1">
    <location>
        <position position="447"/>
    </location>
</feature>
<feature type="binding site" evidence="1">
    <location>
        <position position="135"/>
    </location>
    <ligand>
        <name>Mg(2+)</name>
        <dbReference type="ChEBI" id="CHEBI:18420"/>
    </ligand>
</feature>
<feature type="site" description="Important for substrate recognition" evidence="1">
    <location>
        <position position="296"/>
    </location>
</feature>
<organism>
    <name type="scientific">Dictyostelium discoideum</name>
    <name type="common">Social amoeba</name>
    <dbReference type="NCBI Taxonomy" id="44689"/>
    <lineage>
        <taxon>Eukaryota</taxon>
        <taxon>Amoebozoa</taxon>
        <taxon>Evosea</taxon>
        <taxon>Eumycetozoa</taxon>
        <taxon>Dictyostelia</taxon>
        <taxon>Dictyosteliales</taxon>
        <taxon>Dictyosteliaceae</taxon>
        <taxon>Dictyostelium</taxon>
    </lineage>
</organism>
<evidence type="ECO:0000250" key="1"/>
<evidence type="ECO:0000256" key="2">
    <source>
        <dbReference type="SAM" id="MobiDB-lite"/>
    </source>
</evidence>
<evidence type="ECO:0000305" key="3"/>
<dbReference type="EC" id="3.1.4.12"/>
<dbReference type="EMBL" id="AAFI02000107">
    <property type="protein sequence ID" value="EAS66844.1"/>
    <property type="molecule type" value="Genomic_DNA"/>
</dbReference>
<dbReference type="RefSeq" id="XP_001134527.1">
    <property type="nucleotide sequence ID" value="XM_001134527.1"/>
</dbReference>
<dbReference type="SMR" id="Q1ZXD9"/>
<dbReference type="STRING" id="44689.Q1ZXD9"/>
<dbReference type="GlyGen" id="Q1ZXD9">
    <property type="glycosylation" value="1 site"/>
</dbReference>
<dbReference type="PaxDb" id="44689-DDB0232314"/>
<dbReference type="EnsemblProtists" id="EAS66844">
    <property type="protein sequence ID" value="EAS66844"/>
    <property type="gene ID" value="DDB_G0288017"/>
</dbReference>
<dbReference type="GeneID" id="8626414"/>
<dbReference type="KEGG" id="ddi:DDB_G0288017"/>
<dbReference type="dictyBase" id="DDB_G0288017"/>
<dbReference type="VEuPathDB" id="AmoebaDB:DDB_G0288017"/>
<dbReference type="eggNOG" id="ENOG502S367">
    <property type="taxonomic scope" value="Eukaryota"/>
</dbReference>
<dbReference type="HOGENOM" id="CLU_053972_0_0_1"/>
<dbReference type="InParanoid" id="Q1ZXD9"/>
<dbReference type="OMA" id="IFNTHTQ"/>
<dbReference type="PhylomeDB" id="Q1ZXD9"/>
<dbReference type="Reactome" id="R-DDI-9840310">
    <property type="pathway name" value="Glycosphingolipid catabolism"/>
</dbReference>
<dbReference type="UniPathway" id="UPA00222"/>
<dbReference type="PRO" id="PR:Q1ZXD9"/>
<dbReference type="Proteomes" id="UP000002195">
    <property type="component" value="Chromosome 5"/>
</dbReference>
<dbReference type="GO" id="GO:0005737">
    <property type="term" value="C:cytoplasm"/>
    <property type="evidence" value="ECO:0000318"/>
    <property type="project" value="GO_Central"/>
</dbReference>
<dbReference type="GO" id="GO:0005576">
    <property type="term" value="C:extracellular region"/>
    <property type="evidence" value="ECO:0007669"/>
    <property type="project" value="InterPro"/>
</dbReference>
<dbReference type="GO" id="GO:0016020">
    <property type="term" value="C:membrane"/>
    <property type="evidence" value="ECO:0007669"/>
    <property type="project" value="GOC"/>
</dbReference>
<dbReference type="GO" id="GO:0046872">
    <property type="term" value="F:metal ion binding"/>
    <property type="evidence" value="ECO:0007669"/>
    <property type="project" value="UniProtKB-KW"/>
</dbReference>
<dbReference type="GO" id="GO:0004620">
    <property type="term" value="F:phospholipase activity"/>
    <property type="evidence" value="ECO:0000318"/>
    <property type="project" value="GO_Central"/>
</dbReference>
<dbReference type="GO" id="GO:0004767">
    <property type="term" value="F:sphingomyelin phosphodiesterase activity"/>
    <property type="evidence" value="ECO:0007669"/>
    <property type="project" value="UniProtKB-EC"/>
</dbReference>
<dbReference type="GO" id="GO:0006665">
    <property type="term" value="P:sphingolipid metabolic process"/>
    <property type="evidence" value="ECO:0007669"/>
    <property type="project" value="UniProtKB-UniPathway"/>
</dbReference>
<dbReference type="CDD" id="cd09078">
    <property type="entry name" value="nSMase"/>
    <property type="match status" value="1"/>
</dbReference>
<dbReference type="FunFam" id="3.60.10.10:FF:000217">
    <property type="entry name" value="Sphingomyelinase DDB_G0288017"/>
    <property type="match status" value="1"/>
</dbReference>
<dbReference type="Gene3D" id="3.60.10.10">
    <property type="entry name" value="Endonuclease/exonuclease/phosphatase"/>
    <property type="match status" value="1"/>
</dbReference>
<dbReference type="InterPro" id="IPR036691">
    <property type="entry name" value="Endo/exonu/phosph_ase_sf"/>
</dbReference>
<dbReference type="InterPro" id="IPR005135">
    <property type="entry name" value="Endo/exonuclease/phosphatase"/>
</dbReference>
<dbReference type="InterPro" id="IPR038772">
    <property type="entry name" value="Sph/SMPD2-like"/>
</dbReference>
<dbReference type="InterPro" id="IPR017766">
    <property type="entry name" value="Sphingomyelinase/PLipase_C"/>
</dbReference>
<dbReference type="PANTHER" id="PTHR16320:SF1">
    <property type="entry name" value="SPHINGOMYELINASE DDB_G0288017"/>
    <property type="match status" value="1"/>
</dbReference>
<dbReference type="PANTHER" id="PTHR16320">
    <property type="entry name" value="SPHINGOMYELINASE FAMILY MEMBER"/>
    <property type="match status" value="1"/>
</dbReference>
<dbReference type="Pfam" id="PF03372">
    <property type="entry name" value="Exo_endo_phos"/>
    <property type="match status" value="1"/>
</dbReference>
<dbReference type="SUPFAM" id="SSF56219">
    <property type="entry name" value="DNase I-like"/>
    <property type="match status" value="1"/>
</dbReference>
<protein>
    <recommendedName>
        <fullName>Sphingomyelinase DDB_G0288017</fullName>
        <ecNumber>3.1.4.12</ecNumber>
    </recommendedName>
</protein>
<comment type="function">
    <text evidence="1">Catalyzes the hydrolysis of sphingomyelin to form ceramide and phosphocholine.</text>
</comment>
<comment type="catalytic activity">
    <reaction>
        <text>a sphingomyelin + H2O = phosphocholine + an N-acylsphing-4-enine + H(+)</text>
        <dbReference type="Rhea" id="RHEA:19253"/>
        <dbReference type="ChEBI" id="CHEBI:15377"/>
        <dbReference type="ChEBI" id="CHEBI:15378"/>
        <dbReference type="ChEBI" id="CHEBI:17636"/>
        <dbReference type="ChEBI" id="CHEBI:52639"/>
        <dbReference type="ChEBI" id="CHEBI:295975"/>
        <dbReference type="EC" id="3.1.4.12"/>
    </reaction>
</comment>
<comment type="cofactor">
    <cofactor evidence="1">
        <name>Mg(2+)</name>
        <dbReference type="ChEBI" id="CHEBI:18420"/>
    </cofactor>
</comment>
<comment type="pathway">
    <text>Lipid metabolism; sphingolipid metabolism.</text>
</comment>
<comment type="similarity">
    <text evidence="3">Belongs to the neutral sphingomyelinase family.</text>
</comment>
<reference key="1">
    <citation type="journal article" date="2005" name="Nature">
        <title>The genome of the social amoeba Dictyostelium discoideum.</title>
        <authorList>
            <person name="Eichinger L."/>
            <person name="Pachebat J.A."/>
            <person name="Gloeckner G."/>
            <person name="Rajandream M.A."/>
            <person name="Sucgang R."/>
            <person name="Berriman M."/>
            <person name="Song J."/>
            <person name="Olsen R."/>
            <person name="Szafranski K."/>
            <person name="Xu Q."/>
            <person name="Tunggal B."/>
            <person name="Kummerfeld S."/>
            <person name="Madera M."/>
            <person name="Konfortov B.A."/>
            <person name="Rivero F."/>
            <person name="Bankier A.T."/>
            <person name="Lehmann R."/>
            <person name="Hamlin N."/>
            <person name="Davies R."/>
            <person name="Gaudet P."/>
            <person name="Fey P."/>
            <person name="Pilcher K."/>
            <person name="Chen G."/>
            <person name="Saunders D."/>
            <person name="Sodergren E.J."/>
            <person name="Davis P."/>
            <person name="Kerhornou A."/>
            <person name="Nie X."/>
            <person name="Hall N."/>
            <person name="Anjard C."/>
            <person name="Hemphill L."/>
            <person name="Bason N."/>
            <person name="Farbrother P."/>
            <person name="Desany B."/>
            <person name="Just E."/>
            <person name="Morio T."/>
            <person name="Rost R."/>
            <person name="Churcher C.M."/>
            <person name="Cooper J."/>
            <person name="Haydock S."/>
            <person name="van Driessche N."/>
            <person name="Cronin A."/>
            <person name="Goodhead I."/>
            <person name="Muzny D.M."/>
            <person name="Mourier T."/>
            <person name="Pain A."/>
            <person name="Lu M."/>
            <person name="Harper D."/>
            <person name="Lindsay R."/>
            <person name="Hauser H."/>
            <person name="James K.D."/>
            <person name="Quiles M."/>
            <person name="Madan Babu M."/>
            <person name="Saito T."/>
            <person name="Buchrieser C."/>
            <person name="Wardroper A."/>
            <person name="Felder M."/>
            <person name="Thangavelu M."/>
            <person name="Johnson D."/>
            <person name="Knights A."/>
            <person name="Loulseged H."/>
            <person name="Mungall K.L."/>
            <person name="Oliver K."/>
            <person name="Price C."/>
            <person name="Quail M.A."/>
            <person name="Urushihara H."/>
            <person name="Hernandez J."/>
            <person name="Rabbinowitsch E."/>
            <person name="Steffen D."/>
            <person name="Sanders M."/>
            <person name="Ma J."/>
            <person name="Kohara Y."/>
            <person name="Sharp S."/>
            <person name="Simmonds M.N."/>
            <person name="Spiegler S."/>
            <person name="Tivey A."/>
            <person name="Sugano S."/>
            <person name="White B."/>
            <person name="Walker D."/>
            <person name="Woodward J.R."/>
            <person name="Winckler T."/>
            <person name="Tanaka Y."/>
            <person name="Shaulsky G."/>
            <person name="Schleicher M."/>
            <person name="Weinstock G.M."/>
            <person name="Rosenthal A."/>
            <person name="Cox E.C."/>
            <person name="Chisholm R.L."/>
            <person name="Gibbs R.A."/>
            <person name="Loomis W.F."/>
            <person name="Platzer M."/>
            <person name="Kay R.R."/>
            <person name="Williams J.G."/>
            <person name="Dear P.H."/>
            <person name="Noegel A.A."/>
            <person name="Barrell B.G."/>
            <person name="Kuspa A."/>
        </authorList>
    </citation>
    <scope>NUCLEOTIDE SEQUENCE [LARGE SCALE GENOMIC DNA]</scope>
    <source>
        <strain>AX4</strain>
    </source>
</reference>
<sequence length="458" mass="51899">MTKTIKLLTYNVFIRPPGIKNNENDWKDERIECLISDSLSPHINYNKGSKSAQGIPNAVYSVDKTSFPYIPYFSPWKYPVYGKLMEVTGMNKKAKSPPPPSSLKQQNLHNNSSDYQSIAPSKSILAQYDIICLQELFSAFSYRQRRFIEKAEQQGFQYYATSPSPPYLRSTFLVDGGLTVISKYPIVASDFFLYEQGVDSDMLSSKGVLYTKIKVVPTGSSNDDENFIHLFTTHMQASYAPKSDGSKTVKASATQDQASNYKNDNIRLIQLNQLREFIFEKTFKDKSIIILAGDLNVNGRVSKDDPKDGDSYLQMLELLSNSDQRDLPTGKKIFTIQDLLRDDFNGEHPPTVGDIKFLKDKKQEIPLETVLTNPNDFGCMKRLDYILLFNREFETSIDGVELNFKVPSPTQPSKHSQQHNSISPLKGSTKVDPFFIQGFPFTQLSDHYGVSTILQINK</sequence>
<proteinExistence type="inferred from homology"/>
<gene>
    <name type="ORF">DDB_G0288017</name>
</gene>
<keyword id="KW-0378">Hydrolase</keyword>
<keyword id="KW-0443">Lipid metabolism</keyword>
<keyword id="KW-0460">Magnesium</keyword>
<keyword id="KW-0479">Metal-binding</keyword>
<keyword id="KW-1185">Reference proteome</keyword>
<keyword id="KW-0746">Sphingolipid metabolism</keyword>